<organism>
    <name type="scientific">Allochromatium warmingii</name>
    <name type="common">Chromatium warmingii</name>
    <dbReference type="NCBI Taxonomy" id="61595"/>
    <lineage>
        <taxon>Bacteria</taxon>
        <taxon>Pseudomonadati</taxon>
        <taxon>Pseudomonadota</taxon>
        <taxon>Gammaproteobacteria</taxon>
        <taxon>Chromatiales</taxon>
        <taxon>Chromatiaceae</taxon>
        <taxon>Allochromatium</taxon>
    </lineage>
</organism>
<accession>B3EBZ3</accession>
<keyword id="KW-0004">4Fe-4S</keyword>
<keyword id="KW-0903">Direct protein sequencing</keyword>
<keyword id="KW-0249">Electron transport</keyword>
<keyword id="KW-0408">Iron</keyword>
<keyword id="KW-0411">Iron-sulfur</keyword>
<keyword id="KW-0479">Metal-binding</keyword>
<keyword id="KW-0574">Periplasm</keyword>
<keyword id="KW-0813">Transport</keyword>
<protein>
    <recommendedName>
        <fullName evidence="4">High-potential iron-sulfur protein</fullName>
        <shortName evidence="4">HiPIP</shortName>
    </recommendedName>
</protein>
<comment type="function">
    <text evidence="1 3">Specific class of high-redox-potential 4Fe-4S ferredoxins. Functions in anaerobic electron transport in most purple and in some other photosynthetic bacteria and in at least one genus (Paracoccus) of halophilic, denitrifying bacteria.</text>
</comment>
<comment type="subunit">
    <text evidence="2">Homodimer.</text>
</comment>
<comment type="subcellular location">
    <subcellularLocation>
        <location evidence="1 3">Periplasm</location>
    </subcellularLocation>
</comment>
<comment type="similarity">
    <text evidence="3">Belongs to the high-potential iron-sulfur protein (HiPIP) family.</text>
</comment>
<sequence>SAPANAVSADDATAIALKYNQDATKSERVSAARPGLPPEEQHCANCQFMQADAAGATDEWKGCQLFPGKLINVNGWCASWTLKAG</sequence>
<evidence type="ECO:0000250" key="1">
    <source>
        <dbReference type="UniProtKB" id="P00260"/>
    </source>
</evidence>
<evidence type="ECO:0000250" key="2">
    <source>
        <dbReference type="UniProtKB" id="P59860"/>
    </source>
</evidence>
<evidence type="ECO:0000255" key="3">
    <source>
        <dbReference type="PROSITE-ProRule" id="PRU00705"/>
    </source>
</evidence>
<evidence type="ECO:0000303" key="4">
    <source>
    </source>
</evidence>
<evidence type="ECO:0000305" key="5"/>
<reference evidence="5" key="1">
    <citation type="journal article" date="2003" name="J. Mol. Evol.">
        <title>Amino acid sequences and distribution of high-potential iron-sulfur proteins that donate electrons to the photosynthetic reaction center in phototropic proteobacteria.</title>
        <authorList>
            <person name="Van Driessche G."/>
            <person name="Vandenberghe I."/>
            <person name="Devreese B."/>
            <person name="Samyn B."/>
            <person name="Meyer T.E."/>
            <person name="Leigh R."/>
            <person name="Cusanovich M.A."/>
            <person name="Bartsch R.G."/>
            <person name="Fischer U."/>
            <person name="Van Beeumen J.J."/>
        </authorList>
    </citation>
    <scope>PROTEIN SEQUENCE</scope>
</reference>
<proteinExistence type="evidence at protein level"/>
<feature type="chain" id="PRO_0000415399" description="High-potential iron-sulfur protein">
    <location>
        <begin position="1"/>
        <end position="85"/>
    </location>
</feature>
<feature type="binding site" evidence="1 3">
    <location>
        <position position="43"/>
    </location>
    <ligand>
        <name>[4Fe-4S] cluster</name>
        <dbReference type="ChEBI" id="CHEBI:49883"/>
    </ligand>
</feature>
<feature type="binding site" evidence="1 3">
    <location>
        <position position="46"/>
    </location>
    <ligand>
        <name>[4Fe-4S] cluster</name>
        <dbReference type="ChEBI" id="CHEBI:49883"/>
    </ligand>
</feature>
<feature type="binding site" evidence="1 3">
    <location>
        <position position="63"/>
    </location>
    <ligand>
        <name>[4Fe-4S] cluster</name>
        <dbReference type="ChEBI" id="CHEBI:49883"/>
    </ligand>
</feature>
<feature type="binding site" evidence="1 3">
    <location>
        <position position="77"/>
    </location>
    <ligand>
        <name>[4Fe-4S] cluster</name>
        <dbReference type="ChEBI" id="CHEBI:49883"/>
    </ligand>
</feature>
<name>HIP_ALLWA</name>
<dbReference type="BMRB" id="B3EBZ3"/>
<dbReference type="SMR" id="B3EBZ3"/>
<dbReference type="STRING" id="61595.SAMN05421644_10731"/>
<dbReference type="GO" id="GO:0042597">
    <property type="term" value="C:periplasmic space"/>
    <property type="evidence" value="ECO:0007669"/>
    <property type="project" value="UniProtKB-SubCell"/>
</dbReference>
<dbReference type="GO" id="GO:0051539">
    <property type="term" value="F:4 iron, 4 sulfur cluster binding"/>
    <property type="evidence" value="ECO:0007669"/>
    <property type="project" value="UniProtKB-KW"/>
</dbReference>
<dbReference type="GO" id="GO:0009055">
    <property type="term" value="F:electron transfer activity"/>
    <property type="evidence" value="ECO:0007669"/>
    <property type="project" value="InterPro"/>
</dbReference>
<dbReference type="GO" id="GO:0046872">
    <property type="term" value="F:metal ion binding"/>
    <property type="evidence" value="ECO:0007669"/>
    <property type="project" value="UniProtKB-KW"/>
</dbReference>
<dbReference type="GO" id="GO:0019646">
    <property type="term" value="P:aerobic electron transport chain"/>
    <property type="evidence" value="ECO:0007669"/>
    <property type="project" value="InterPro"/>
</dbReference>
<dbReference type="Gene3D" id="4.10.490.10">
    <property type="entry name" value="High potential iron-sulphur protein"/>
    <property type="match status" value="1"/>
</dbReference>
<dbReference type="InterPro" id="IPR000170">
    <property type="entry name" value="High_potential_FeS_prot"/>
</dbReference>
<dbReference type="InterPro" id="IPR036369">
    <property type="entry name" value="HIPIP_sf"/>
</dbReference>
<dbReference type="Pfam" id="PF01355">
    <property type="entry name" value="HIPIP"/>
    <property type="match status" value="1"/>
</dbReference>
<dbReference type="SUPFAM" id="SSF57652">
    <property type="entry name" value="HIPIP (high potential iron protein)"/>
    <property type="match status" value="1"/>
</dbReference>
<dbReference type="PROSITE" id="PS51373">
    <property type="entry name" value="HIPIP"/>
    <property type="match status" value="1"/>
</dbReference>